<accession>Q09JW4</accession>
<gene>
    <name evidence="4 5" type="ORF">AM-30A</name>
</gene>
<feature type="chain" id="PRO_0000456092" description="Monogrin 1" evidence="7">
    <location>
        <begin position="1"/>
        <end position="87"/>
    </location>
</feature>
<feature type="domain" description="BPTI/Kunitz inhibitor" evidence="2">
    <location>
        <begin position="8"/>
        <end position="62"/>
    </location>
</feature>
<feature type="short sequence motif" description="Cell attachment site" evidence="7">
    <location>
        <begin position="17"/>
        <end position="19"/>
    </location>
</feature>
<feature type="disulfide bond" evidence="2">
    <location>
        <begin position="8"/>
        <end position="62"/>
    </location>
</feature>
<feature type="disulfide bond" evidence="7">
    <location>
        <begin position="16"/>
        <end position="42"/>
    </location>
</feature>
<feature type="disulfide bond" evidence="2">
    <location>
        <begin position="35"/>
        <end position="58"/>
    </location>
</feature>
<dbReference type="EMBL" id="DQ886732">
    <property type="protein sequence ID" value="ABI52649.1"/>
    <property type="molecule type" value="mRNA"/>
</dbReference>
<dbReference type="GO" id="GO:0005576">
    <property type="term" value="C:extracellular region"/>
    <property type="evidence" value="ECO:0007669"/>
    <property type="project" value="UniProtKB-SubCell"/>
</dbReference>
<dbReference type="GO" id="GO:0030133">
    <property type="term" value="C:transport vesicle"/>
    <property type="evidence" value="ECO:0007669"/>
    <property type="project" value="UniProtKB-SubCell"/>
</dbReference>
<dbReference type="GO" id="GO:0004867">
    <property type="term" value="F:serine-type endopeptidase inhibitor activity"/>
    <property type="evidence" value="ECO:0007669"/>
    <property type="project" value="UniProtKB-KW"/>
</dbReference>
<dbReference type="GO" id="GO:0090729">
    <property type="term" value="F:toxin activity"/>
    <property type="evidence" value="ECO:0007669"/>
    <property type="project" value="UniProtKB-KW"/>
</dbReference>
<dbReference type="Gene3D" id="4.10.410.10">
    <property type="entry name" value="Pancreatic trypsin inhibitor Kunitz domain"/>
    <property type="match status" value="1"/>
</dbReference>
<dbReference type="InterPro" id="IPR036880">
    <property type="entry name" value="Kunitz_BPTI_sf"/>
</dbReference>
<dbReference type="SUPFAM" id="SSF57362">
    <property type="entry name" value="BPTI-like"/>
    <property type="match status" value="1"/>
</dbReference>
<sequence>AKGDTRRCGYLMMRGCRGDTTATRAWGFNYEEKKCQQETVICGTGGAPRNAFETKQDCDALCEGYSGPQYSMQEMLQHLKENAKKTG</sequence>
<protein>
    <recommendedName>
        <fullName evidence="4">Monogrin 1</fullName>
        <shortName evidence="4">MG1</shortName>
    </recommendedName>
    <alternativeName>
        <fullName evidence="9">Monogrin 1A</fullName>
    </alternativeName>
    <alternativeName>
        <fullName evidence="4">Platelet aggregation inhibitor</fullName>
        <shortName evidence="6">PAI</shortName>
    </alternativeName>
</protein>
<reference evidence="9" key="1">
    <citation type="journal article" date="2008" name="Insect Biochem. Mol. Biol.">
        <title>Characterization of anti-hemostatic factors in the argasid, Argas monolakensis: implications for the evolution of blood-feeding in the soft tick family.</title>
        <authorList>
            <person name="Mans B.J."/>
            <person name="Andersen J.F."/>
            <person name="Schwan T.G."/>
            <person name="Ribeiro J.M."/>
        </authorList>
    </citation>
    <scope>NUCLEOTIDE SEQUENCE [MRNA]</scope>
    <scope>FUNCTION</scope>
    <scope>MASS SPECTROMETRY</scope>
    <scope>IDENTIFICATION BY MASS SPECTROMETRY</scope>
    <source>
        <tissue>Salivary gland</tissue>
    </source>
</reference>
<reference evidence="9" key="2">
    <citation type="journal article" date="2008" name="Insect Biochem. Mol. Biol.">
        <title>Comparative sialomics between hard and soft ticks: implications for the evolution of blood-feeding behavior.</title>
        <authorList>
            <person name="Mans B.J."/>
            <person name="Andersen J.F."/>
            <person name="Francischetti I.M."/>
            <person name="Valenzuela J.G."/>
            <person name="Schwan T.G."/>
            <person name="Pham V.M."/>
            <person name="Garfield M.K."/>
            <person name="Hammer C.H."/>
            <person name="Ribeiro J.M.C."/>
        </authorList>
    </citation>
    <scope>NUCLEOTIDE SEQUENCE [LARGE SCALE MRNA]</scope>
    <source>
        <tissue>Salivary gland</tissue>
    </source>
</reference>
<organism>
    <name type="scientific">Argas monolakensis</name>
    <name type="common">Mono lake bird tick</name>
    <dbReference type="NCBI Taxonomy" id="34602"/>
    <lineage>
        <taxon>Eukaryota</taxon>
        <taxon>Metazoa</taxon>
        <taxon>Ecdysozoa</taxon>
        <taxon>Arthropoda</taxon>
        <taxon>Chelicerata</taxon>
        <taxon>Arachnida</taxon>
        <taxon>Acari</taxon>
        <taxon>Parasitiformes</taxon>
        <taxon>Ixodida</taxon>
        <taxon>Ixodoidea</taxon>
        <taxon>Argasidae</taxon>
        <taxon>Argasinae</taxon>
        <taxon>Argas</taxon>
    </lineage>
</organism>
<name>KUNP1_ARGMO</name>
<comment type="function">
    <text evidence="3">Tick salivary platelet aggregation inhibitor that plays an important part in the anti-hemostatic strategy of ticks. Inhibits platelet aggregation induced by ADP (IC(50)~150 nM), collagen, and platelet activating factor (PAF) (PubMed:18070663). Acts by binding to platelet membrane glycoprotein IIb-IIIa (ITGA2B/ITGB3) in a metal ion dependent manner (PubMed:18070663). Does not inhibit aggregation induced by ristocecin, an agonist that aggregates platelets independently from the glycoprotein IIb-IIIa (ITGA2B/ITGB3). In contrast to other tick platelet aggregation inhibitors, this protein does not protect ITGA2B/ITGB3 from dissociation under SDS condition, suggesting it may dissocate much faster than its orthologs (PubMed:18070663).</text>
</comment>
<comment type="subcellular location">
    <subcellularLocation>
        <location evidence="1">Cytoplasmic vesicle</location>
        <location evidence="1">Secretory vesicle</location>
    </subcellularLocation>
    <subcellularLocation>
        <location evidence="7">Secreted</location>
    </subcellularLocation>
</comment>
<comment type="tissue specificity">
    <text evidence="7 8">Expressed in salivary glands.</text>
</comment>
<comment type="PTM">
    <text evidence="3">The N-terminus is blocked.</text>
</comment>
<comment type="mass spectrometry"/>
<comment type="miscellaneous">
    <text evidence="3">The monogrins comprise about 4% of the total salivary gland protein.</text>
</comment>
<evidence type="ECO:0000250" key="1">
    <source>
        <dbReference type="UniProtKB" id="Q8MVZ2"/>
    </source>
</evidence>
<evidence type="ECO:0000255" key="2">
    <source>
        <dbReference type="PROSITE-ProRule" id="PRU00031"/>
    </source>
</evidence>
<evidence type="ECO:0000269" key="3">
    <source>
    </source>
</evidence>
<evidence type="ECO:0000303" key="4">
    <source>
    </source>
</evidence>
<evidence type="ECO:0000303" key="5">
    <source>
    </source>
</evidence>
<evidence type="ECO:0000305" key="6"/>
<evidence type="ECO:0000305" key="7">
    <source>
    </source>
</evidence>
<evidence type="ECO:0000305" key="8">
    <source>
    </source>
</evidence>
<evidence type="ECO:0000312" key="9">
    <source>
        <dbReference type="EMBL" id="ABI52649.1"/>
    </source>
</evidence>
<keyword id="KW-0968">Cytoplasmic vesicle</keyword>
<keyword id="KW-1015">Disulfide bond</keyword>
<keyword id="KW-1199">Hemostasis impairing toxin</keyword>
<keyword id="KW-1201">Platelet aggregation inhibiting toxin</keyword>
<keyword id="KW-0646">Protease inhibitor</keyword>
<keyword id="KW-0964">Secreted</keyword>
<keyword id="KW-0722">Serine protease inhibitor</keyword>
<keyword id="KW-0800">Toxin</keyword>
<proteinExistence type="evidence at protein level"/>